<reference key="1">
    <citation type="journal article" date="1997" name="Yeast">
        <title>An 18.3 kb DNA fragment from yeast chromosome VII carries four unknown open reading frames, the gene for an Asn synthase, remnants of Ty and three tRNA genes.</title>
        <authorList>
            <person name="van Dyck L."/>
            <person name="Tettelin H."/>
            <person name="Purnelle B."/>
            <person name="Goffeau A."/>
        </authorList>
    </citation>
    <scope>NUCLEOTIDE SEQUENCE [GENOMIC DNA]</scope>
    <source>
        <strain>ATCC 96604 / S288c / FY1679</strain>
    </source>
</reference>
<reference key="2">
    <citation type="journal article" date="1997" name="Nature">
        <title>The nucleotide sequence of Saccharomyces cerevisiae chromosome VII.</title>
        <authorList>
            <person name="Tettelin H."/>
            <person name="Agostoni-Carbone M.L."/>
            <person name="Albermann K."/>
            <person name="Albers M."/>
            <person name="Arroyo J."/>
            <person name="Backes U."/>
            <person name="Barreiros T."/>
            <person name="Bertani I."/>
            <person name="Bjourson A.J."/>
            <person name="Brueckner M."/>
            <person name="Bruschi C.V."/>
            <person name="Carignani G."/>
            <person name="Castagnoli L."/>
            <person name="Cerdan E."/>
            <person name="Clemente M.L."/>
            <person name="Coblenz A."/>
            <person name="Coglievina M."/>
            <person name="Coissac E."/>
            <person name="Defoor E."/>
            <person name="Del Bino S."/>
            <person name="Delius H."/>
            <person name="Delneri D."/>
            <person name="de Wergifosse P."/>
            <person name="Dujon B."/>
            <person name="Durand P."/>
            <person name="Entian K.-D."/>
            <person name="Eraso P."/>
            <person name="Escribano V."/>
            <person name="Fabiani L."/>
            <person name="Fartmann B."/>
            <person name="Feroli F."/>
            <person name="Feuermann M."/>
            <person name="Frontali L."/>
            <person name="Garcia-Gonzalez M."/>
            <person name="Garcia-Saez M.I."/>
            <person name="Goffeau A."/>
            <person name="Guerreiro P."/>
            <person name="Hani J."/>
            <person name="Hansen M."/>
            <person name="Hebling U."/>
            <person name="Hernandez K."/>
            <person name="Heumann K."/>
            <person name="Hilger F."/>
            <person name="Hofmann B."/>
            <person name="Indge K.J."/>
            <person name="James C.M."/>
            <person name="Klima R."/>
            <person name="Koetter P."/>
            <person name="Kramer B."/>
            <person name="Kramer W."/>
            <person name="Lauquin G."/>
            <person name="Leuther H."/>
            <person name="Louis E.J."/>
            <person name="Maillier E."/>
            <person name="Marconi A."/>
            <person name="Martegani E."/>
            <person name="Mazon M.J."/>
            <person name="Mazzoni C."/>
            <person name="McReynolds A.D.K."/>
            <person name="Melchioretto P."/>
            <person name="Mewes H.-W."/>
            <person name="Minenkova O."/>
            <person name="Mueller-Auer S."/>
            <person name="Nawrocki A."/>
            <person name="Netter P."/>
            <person name="Neu R."/>
            <person name="Nombela C."/>
            <person name="Oliver S.G."/>
            <person name="Panzeri L."/>
            <person name="Paoluzi S."/>
            <person name="Plevani P."/>
            <person name="Portetelle D."/>
            <person name="Portillo F."/>
            <person name="Potier S."/>
            <person name="Purnelle B."/>
            <person name="Rieger M."/>
            <person name="Riles L."/>
            <person name="Rinaldi T."/>
            <person name="Robben J."/>
            <person name="Rodrigues-Pousada C."/>
            <person name="Rodriguez-Belmonte E."/>
            <person name="Rodriguez-Torres A.M."/>
            <person name="Rose M."/>
            <person name="Ruzzi M."/>
            <person name="Saliola M."/>
            <person name="Sanchez-Perez M."/>
            <person name="Schaefer B."/>
            <person name="Schaefer M."/>
            <person name="Scharfe M."/>
            <person name="Schmidheini T."/>
            <person name="Schreer A."/>
            <person name="Skala J."/>
            <person name="Souciet J.-L."/>
            <person name="Steensma H.Y."/>
            <person name="Talla E."/>
            <person name="Thierry A."/>
            <person name="Vandenbol M."/>
            <person name="van der Aart Q.J.M."/>
            <person name="Van Dyck L."/>
            <person name="Vanoni M."/>
            <person name="Verhasselt P."/>
            <person name="Voet M."/>
            <person name="Volckaert G."/>
            <person name="Wambutt R."/>
            <person name="Watson M.D."/>
            <person name="Weber N."/>
            <person name="Wedler E."/>
            <person name="Wedler H."/>
            <person name="Wipfli P."/>
            <person name="Wolf K."/>
            <person name="Wright L.F."/>
            <person name="Zaccaria P."/>
            <person name="Zimmermann M."/>
            <person name="Zollner A."/>
            <person name="Kleine K."/>
        </authorList>
    </citation>
    <scope>NUCLEOTIDE SEQUENCE [LARGE SCALE GENOMIC DNA]</scope>
    <source>
        <strain>ATCC 204508 / S288c</strain>
    </source>
</reference>
<reference key="3">
    <citation type="journal article" date="2014" name="G3 (Bethesda)">
        <title>The reference genome sequence of Saccharomyces cerevisiae: Then and now.</title>
        <authorList>
            <person name="Engel S.R."/>
            <person name="Dietrich F.S."/>
            <person name="Fisk D.G."/>
            <person name="Binkley G."/>
            <person name="Balakrishnan R."/>
            <person name="Costanzo M.C."/>
            <person name="Dwight S.S."/>
            <person name="Hitz B.C."/>
            <person name="Karra K."/>
            <person name="Nash R.S."/>
            <person name="Weng S."/>
            <person name="Wong E.D."/>
            <person name="Lloyd P."/>
            <person name="Skrzypek M.S."/>
            <person name="Miyasato S.R."/>
            <person name="Simison M."/>
            <person name="Cherry J.M."/>
        </authorList>
    </citation>
    <scope>GENOME REANNOTATION</scope>
    <source>
        <strain>ATCC 204508 / S288c</strain>
    </source>
</reference>
<reference key="4">
    <citation type="journal article" date="2007" name="Genome Res.">
        <title>Approaching a complete repository of sequence-verified protein-encoding clones for Saccharomyces cerevisiae.</title>
        <authorList>
            <person name="Hu Y."/>
            <person name="Rolfs A."/>
            <person name="Bhullar B."/>
            <person name="Murthy T.V.S."/>
            <person name="Zhu C."/>
            <person name="Berger M.F."/>
            <person name="Camargo A.A."/>
            <person name="Kelley F."/>
            <person name="McCarron S."/>
            <person name="Jepson D."/>
            <person name="Richardson A."/>
            <person name="Raphael J."/>
            <person name="Moreira D."/>
            <person name="Taycher E."/>
            <person name="Zuo D."/>
            <person name="Mohr S."/>
            <person name="Kane M.F."/>
            <person name="Williamson J."/>
            <person name="Simpson A.J.G."/>
            <person name="Bulyk M.L."/>
            <person name="Harlow E."/>
            <person name="Marsischky G."/>
            <person name="Kolodner R.D."/>
            <person name="LaBaer J."/>
        </authorList>
    </citation>
    <scope>NUCLEOTIDE SEQUENCE [GENOMIC DNA]</scope>
    <source>
        <strain>ATCC 204508 / S288c</strain>
    </source>
</reference>
<protein>
    <recommendedName>
        <fullName>Uncharacterized protein YGR122W</fullName>
    </recommendedName>
</protein>
<proteinExistence type="predicted"/>
<organism>
    <name type="scientific">Saccharomyces cerevisiae (strain ATCC 204508 / S288c)</name>
    <name type="common">Baker's yeast</name>
    <dbReference type="NCBI Taxonomy" id="559292"/>
    <lineage>
        <taxon>Eukaryota</taxon>
        <taxon>Fungi</taxon>
        <taxon>Dikarya</taxon>
        <taxon>Ascomycota</taxon>
        <taxon>Saccharomycotina</taxon>
        <taxon>Saccharomycetes</taxon>
        <taxon>Saccharomycetales</taxon>
        <taxon>Saccharomycetaceae</taxon>
        <taxon>Saccharomyces</taxon>
    </lineage>
</organism>
<accession>P53272</accession>
<accession>D6VUQ4</accession>
<feature type="chain" id="PRO_0000202818" description="Uncharacterized protein YGR122W">
    <location>
        <begin position="1"/>
        <end position="402"/>
    </location>
</feature>
<dbReference type="EMBL" id="X83099">
    <property type="protein sequence ID" value="CAA58157.1"/>
    <property type="molecule type" value="Genomic_DNA"/>
</dbReference>
<dbReference type="EMBL" id="Z72907">
    <property type="protein sequence ID" value="CAA97133.1"/>
    <property type="molecule type" value="Genomic_DNA"/>
</dbReference>
<dbReference type="EMBL" id="AY558113">
    <property type="protein sequence ID" value="AAS56439.1"/>
    <property type="molecule type" value="Genomic_DNA"/>
</dbReference>
<dbReference type="EMBL" id="BK006941">
    <property type="protein sequence ID" value="DAA08215.1"/>
    <property type="molecule type" value="Genomic_DNA"/>
</dbReference>
<dbReference type="PIR" id="S55980">
    <property type="entry name" value="S55980"/>
</dbReference>
<dbReference type="RefSeq" id="NP_011637.3">
    <property type="nucleotide sequence ID" value="NM_001181251.3"/>
</dbReference>
<dbReference type="BioGRID" id="33368">
    <property type="interactions" value="265"/>
</dbReference>
<dbReference type="DIP" id="DIP-1866N"/>
<dbReference type="FunCoup" id="P53272">
    <property type="interactions" value="48"/>
</dbReference>
<dbReference type="IntAct" id="P53272">
    <property type="interactions" value="3"/>
</dbReference>
<dbReference type="MINT" id="P53272"/>
<dbReference type="STRING" id="4932.YGR122W"/>
<dbReference type="PaxDb" id="4932-YGR122W"/>
<dbReference type="PeptideAtlas" id="P53272"/>
<dbReference type="EnsemblFungi" id="YGR122W_mRNA">
    <property type="protein sequence ID" value="YGR122W"/>
    <property type="gene ID" value="YGR122W"/>
</dbReference>
<dbReference type="GeneID" id="853020"/>
<dbReference type="KEGG" id="sce:YGR122W"/>
<dbReference type="AGR" id="SGD:S000003354"/>
<dbReference type="SGD" id="S000003354">
    <property type="gene designation" value="YGR122W"/>
</dbReference>
<dbReference type="VEuPathDB" id="FungiDB:YGR122W"/>
<dbReference type="eggNOG" id="ENOG502RY3I">
    <property type="taxonomic scope" value="Eukaryota"/>
</dbReference>
<dbReference type="HOGENOM" id="CLU_054583_0_0_1"/>
<dbReference type="InParanoid" id="P53272"/>
<dbReference type="OMA" id="NDECGIA"/>
<dbReference type="OrthoDB" id="4031940at2759"/>
<dbReference type="BioCyc" id="YEAST:G3O-30829-MONOMER"/>
<dbReference type="BioGRID-ORCS" id="853020">
    <property type="hits" value="1 hit in 10 CRISPR screens"/>
</dbReference>
<dbReference type="PRO" id="PR:P53272"/>
<dbReference type="Proteomes" id="UP000002311">
    <property type="component" value="Chromosome VII"/>
</dbReference>
<dbReference type="RNAct" id="P53272">
    <property type="molecule type" value="protein"/>
</dbReference>
<dbReference type="GO" id="GO:0005737">
    <property type="term" value="C:cytoplasm"/>
    <property type="evidence" value="ECO:0007005"/>
    <property type="project" value="SGD"/>
</dbReference>
<dbReference type="GO" id="GO:0005634">
    <property type="term" value="C:nucleus"/>
    <property type="evidence" value="ECO:0007005"/>
    <property type="project" value="SGD"/>
</dbReference>
<dbReference type="GO" id="GO:0005886">
    <property type="term" value="C:plasma membrane"/>
    <property type="evidence" value="ECO:0007005"/>
    <property type="project" value="SGD"/>
</dbReference>
<dbReference type="GO" id="GO:0000122">
    <property type="term" value="P:negative regulation of transcription by RNA polymerase II"/>
    <property type="evidence" value="ECO:0000315"/>
    <property type="project" value="SGD"/>
</dbReference>
<dbReference type="GO" id="GO:0070481">
    <property type="term" value="P:nuclear-transcribed mRNA catabolic process, non-stop decay"/>
    <property type="evidence" value="ECO:0000315"/>
    <property type="project" value="SGD"/>
</dbReference>
<dbReference type="InterPro" id="IPR035278">
    <property type="entry name" value="DUF5355"/>
</dbReference>
<dbReference type="Pfam" id="PF17306">
    <property type="entry name" value="DUF5355"/>
    <property type="match status" value="1"/>
</dbReference>
<keyword id="KW-1185">Reference proteome</keyword>
<name>YG34_YEAST</name>
<gene>
    <name type="ordered locus">YGR122W</name>
    <name type="ORF">G6335</name>
</gene>
<sequence>MRENAMSTKKLPYKLSGSSKITTSIPNDLIILRNNCINSLNSSSSKADSITCIDTWLKYTEGLLTHRYEANNDAALIEEEIAIALINVAVFYQDIGIETLYRAYESSQASNNLWTTSGTYLKRGLGLICFLGKNFQINTANDCQKMQVLNVLNQLSLEFQLLQQLGIVVLALSKLRSKISKDAVADLEPQELEELGKSSVFYAKLCIGSYSTASQCQGGRIVDALFMNYLQSLTYLFLSINQYNNDECGIAIGMLQESIKKLLNIVPNSQLKELDILSSTDITKKRDLIKMSFKRKIHGSTLKNQRIFEKKVPFSSKAYMMPLLKSSLDDFVIPLTILLRYRYQTTNENYSFKTVETDVSKLKELFPRGKSSDIEGTVWSFQDGHLTFADSNNATHNCGNYF</sequence>